<keyword id="KW-0627">Porphyrin biosynthesis</keyword>
<keyword id="KW-1185">Reference proteome</keyword>
<keyword id="KW-0808">Transferase</keyword>
<accession>Q817R0</accession>
<protein>
    <recommendedName>
        <fullName evidence="1">Porphobilinogen deaminase</fullName>
        <shortName evidence="1">PBG</shortName>
        <ecNumber evidence="1">2.5.1.61</ecNumber>
    </recommendedName>
    <alternativeName>
        <fullName evidence="1">Hydroxymethylbilane synthase</fullName>
        <shortName evidence="1">HMBS</shortName>
    </alternativeName>
    <alternativeName>
        <fullName evidence="1">Pre-uroporphyrinogen synthase</fullName>
    </alternativeName>
</protein>
<organism>
    <name type="scientific">Bacillus cereus (strain ATCC 14579 / DSM 31 / CCUG 7414 / JCM 2152 / NBRC 15305 / NCIMB 9373 / NCTC 2599 / NRRL B-3711)</name>
    <dbReference type="NCBI Taxonomy" id="226900"/>
    <lineage>
        <taxon>Bacteria</taxon>
        <taxon>Bacillati</taxon>
        <taxon>Bacillota</taxon>
        <taxon>Bacilli</taxon>
        <taxon>Bacillales</taxon>
        <taxon>Bacillaceae</taxon>
        <taxon>Bacillus</taxon>
        <taxon>Bacillus cereus group</taxon>
    </lineage>
</organism>
<name>HEM3_BACCR</name>
<gene>
    <name evidence="1" type="primary">hemC</name>
    <name type="ordered locus">BC_4471</name>
</gene>
<evidence type="ECO:0000255" key="1">
    <source>
        <dbReference type="HAMAP-Rule" id="MF_00260"/>
    </source>
</evidence>
<proteinExistence type="inferred from homology"/>
<comment type="function">
    <text evidence="1">Tetrapolymerization of the monopyrrole PBG into the hydroxymethylbilane pre-uroporphyrinogen in several discrete steps.</text>
</comment>
<comment type="catalytic activity">
    <reaction evidence="1">
        <text>4 porphobilinogen + H2O = hydroxymethylbilane + 4 NH4(+)</text>
        <dbReference type="Rhea" id="RHEA:13185"/>
        <dbReference type="ChEBI" id="CHEBI:15377"/>
        <dbReference type="ChEBI" id="CHEBI:28938"/>
        <dbReference type="ChEBI" id="CHEBI:57845"/>
        <dbReference type="ChEBI" id="CHEBI:58126"/>
        <dbReference type="EC" id="2.5.1.61"/>
    </reaction>
</comment>
<comment type="cofactor">
    <cofactor evidence="1">
        <name>dipyrromethane</name>
        <dbReference type="ChEBI" id="CHEBI:60342"/>
    </cofactor>
    <text evidence="1">Binds 1 dipyrromethane group covalently.</text>
</comment>
<comment type="pathway">
    <text evidence="1">Porphyrin-containing compound metabolism; protoporphyrin-IX biosynthesis; coproporphyrinogen-III from 5-aminolevulinate: step 2/4.</text>
</comment>
<comment type="subunit">
    <text evidence="1">Monomer.</text>
</comment>
<comment type="miscellaneous">
    <text evidence="1">The porphobilinogen subunits are added to the dipyrromethane group.</text>
</comment>
<comment type="similarity">
    <text evidence="1">Belongs to the HMBS family.</text>
</comment>
<sequence length="309" mass="33790">MRKIIVGSRKSKLALTQTNWFIDQLKALGLPYEFEVKEIVTKGDVILDVTLSKVGGKGLFVKEIEHALLTKEIDMAVHSMKDMPAVLPEGLMIGCTPKRVDPRDAFISKNGASFKELAEGAILGTSSLRRSAQLLAARPDLQVKWIRGNIDTRLRKLKEEDYDAIILATAGLQRMGWDNDVITEHLDDTLCVPAVGQGALAIECREDDKDLLQLLAHINDTITERTVAAERVFLHKLEGGCQVPIAGYATLTENDAIELTALVGSMDGSVLLKETVVGTNPEEVGLEAADRLIKQGAKELILAANKEQQ</sequence>
<feature type="chain" id="PRO_0000142905" description="Porphobilinogen deaminase">
    <location>
        <begin position="1"/>
        <end position="309"/>
    </location>
</feature>
<feature type="modified residue" description="S-(dipyrrolylmethanemethyl)cysteine" evidence="1">
    <location>
        <position position="241"/>
    </location>
</feature>
<reference key="1">
    <citation type="journal article" date="2003" name="Nature">
        <title>Genome sequence of Bacillus cereus and comparative analysis with Bacillus anthracis.</title>
        <authorList>
            <person name="Ivanova N."/>
            <person name="Sorokin A."/>
            <person name="Anderson I."/>
            <person name="Galleron N."/>
            <person name="Candelon B."/>
            <person name="Kapatral V."/>
            <person name="Bhattacharyya A."/>
            <person name="Reznik G."/>
            <person name="Mikhailova N."/>
            <person name="Lapidus A."/>
            <person name="Chu L."/>
            <person name="Mazur M."/>
            <person name="Goltsman E."/>
            <person name="Larsen N."/>
            <person name="D'Souza M."/>
            <person name="Walunas T."/>
            <person name="Grechkin Y."/>
            <person name="Pusch G."/>
            <person name="Haselkorn R."/>
            <person name="Fonstein M."/>
            <person name="Ehrlich S.D."/>
            <person name="Overbeek R."/>
            <person name="Kyrpides N.C."/>
        </authorList>
    </citation>
    <scope>NUCLEOTIDE SEQUENCE [LARGE SCALE GENOMIC DNA]</scope>
    <source>
        <strain>ATCC 14579 / DSM 31 / CCUG 7414 / JCM 2152 / NBRC 15305 / NCIMB 9373 / NCTC 2599 / NRRL B-3711</strain>
    </source>
</reference>
<dbReference type="EC" id="2.5.1.61" evidence="1"/>
<dbReference type="EMBL" id="AE016877">
    <property type="protein sequence ID" value="AAP11384.1"/>
    <property type="molecule type" value="Genomic_DNA"/>
</dbReference>
<dbReference type="RefSeq" id="NP_834183.1">
    <property type="nucleotide sequence ID" value="NC_004722.1"/>
</dbReference>
<dbReference type="RefSeq" id="WP_001226407.1">
    <property type="nucleotide sequence ID" value="NZ_CP138336.1"/>
</dbReference>
<dbReference type="SMR" id="Q817R0"/>
<dbReference type="STRING" id="226900.BC_4471"/>
<dbReference type="KEGG" id="bce:BC4471"/>
<dbReference type="PATRIC" id="fig|226900.8.peg.4624"/>
<dbReference type="HOGENOM" id="CLU_019704_0_2_9"/>
<dbReference type="OrthoDB" id="9810298at2"/>
<dbReference type="UniPathway" id="UPA00251">
    <property type="reaction ID" value="UER00319"/>
</dbReference>
<dbReference type="Proteomes" id="UP000001417">
    <property type="component" value="Chromosome"/>
</dbReference>
<dbReference type="GO" id="GO:0005737">
    <property type="term" value="C:cytoplasm"/>
    <property type="evidence" value="ECO:0000318"/>
    <property type="project" value="GO_Central"/>
</dbReference>
<dbReference type="GO" id="GO:0004418">
    <property type="term" value="F:hydroxymethylbilane synthase activity"/>
    <property type="evidence" value="ECO:0000318"/>
    <property type="project" value="GO_Central"/>
</dbReference>
<dbReference type="GO" id="GO:0006783">
    <property type="term" value="P:heme biosynthetic process"/>
    <property type="evidence" value="ECO:0000318"/>
    <property type="project" value="GO_Central"/>
</dbReference>
<dbReference type="GO" id="GO:0006782">
    <property type="term" value="P:protoporphyrinogen IX biosynthetic process"/>
    <property type="evidence" value="ECO:0007669"/>
    <property type="project" value="UniProtKB-UniRule"/>
</dbReference>
<dbReference type="CDD" id="cd13646">
    <property type="entry name" value="PBP2_EcHMBS_like"/>
    <property type="match status" value="1"/>
</dbReference>
<dbReference type="FunFam" id="3.30.160.40:FF:000001">
    <property type="entry name" value="Porphobilinogen deaminase"/>
    <property type="match status" value="1"/>
</dbReference>
<dbReference type="FunFam" id="3.40.190.10:FF:000004">
    <property type="entry name" value="Porphobilinogen deaminase"/>
    <property type="match status" value="1"/>
</dbReference>
<dbReference type="FunFam" id="3.40.190.10:FF:000005">
    <property type="entry name" value="Porphobilinogen deaminase"/>
    <property type="match status" value="1"/>
</dbReference>
<dbReference type="Gene3D" id="3.40.190.10">
    <property type="entry name" value="Periplasmic binding protein-like II"/>
    <property type="match status" value="2"/>
</dbReference>
<dbReference type="Gene3D" id="3.30.160.40">
    <property type="entry name" value="Porphobilinogen deaminase, C-terminal domain"/>
    <property type="match status" value="1"/>
</dbReference>
<dbReference type="HAMAP" id="MF_00260">
    <property type="entry name" value="Porphobil_deam"/>
    <property type="match status" value="1"/>
</dbReference>
<dbReference type="InterPro" id="IPR000860">
    <property type="entry name" value="HemC"/>
</dbReference>
<dbReference type="InterPro" id="IPR022419">
    <property type="entry name" value="Porphobilin_deaminase_cofac_BS"/>
</dbReference>
<dbReference type="InterPro" id="IPR022417">
    <property type="entry name" value="Porphobilin_deaminase_N"/>
</dbReference>
<dbReference type="InterPro" id="IPR022418">
    <property type="entry name" value="Porphobilinogen_deaminase_C"/>
</dbReference>
<dbReference type="InterPro" id="IPR036803">
    <property type="entry name" value="Porphobilinogen_deaminase_C_sf"/>
</dbReference>
<dbReference type="NCBIfam" id="TIGR00212">
    <property type="entry name" value="hemC"/>
    <property type="match status" value="1"/>
</dbReference>
<dbReference type="PANTHER" id="PTHR11557">
    <property type="entry name" value="PORPHOBILINOGEN DEAMINASE"/>
    <property type="match status" value="1"/>
</dbReference>
<dbReference type="PANTHER" id="PTHR11557:SF0">
    <property type="entry name" value="PORPHOBILINOGEN DEAMINASE"/>
    <property type="match status" value="1"/>
</dbReference>
<dbReference type="Pfam" id="PF01379">
    <property type="entry name" value="Porphobil_deam"/>
    <property type="match status" value="1"/>
</dbReference>
<dbReference type="Pfam" id="PF03900">
    <property type="entry name" value="Porphobil_deamC"/>
    <property type="match status" value="1"/>
</dbReference>
<dbReference type="PIRSF" id="PIRSF001438">
    <property type="entry name" value="4pyrrol_synth_OHMeBilane_synth"/>
    <property type="match status" value="1"/>
</dbReference>
<dbReference type="PRINTS" id="PR00151">
    <property type="entry name" value="PORPHBDMNASE"/>
</dbReference>
<dbReference type="SUPFAM" id="SSF53850">
    <property type="entry name" value="Periplasmic binding protein-like II"/>
    <property type="match status" value="1"/>
</dbReference>
<dbReference type="SUPFAM" id="SSF54782">
    <property type="entry name" value="Porphobilinogen deaminase (hydroxymethylbilane synthase), C-terminal domain"/>
    <property type="match status" value="1"/>
</dbReference>
<dbReference type="PROSITE" id="PS00533">
    <property type="entry name" value="PORPHOBILINOGEN_DEAM"/>
    <property type="match status" value="1"/>
</dbReference>